<keyword id="KW-0067">ATP-binding</keyword>
<keyword id="KW-0547">Nucleotide-binding</keyword>
<keyword id="KW-0647">Proteasome</keyword>
<keyword id="KW-1185">Reference proteome</keyword>
<feature type="chain" id="PRO_0000084754" description="Putative 26S proteasome regulatory subunit homolog MJ1494">
    <location>
        <begin position="1"/>
        <end position="371"/>
    </location>
</feature>
<feature type="binding site" evidence="2">
    <location>
        <begin position="161"/>
        <end position="168"/>
    </location>
    <ligand>
        <name>ATP</name>
        <dbReference type="ChEBI" id="CHEBI:30616"/>
    </ligand>
</feature>
<gene>
    <name type="ordered locus">MJ1494</name>
</gene>
<organism>
    <name type="scientific">Methanocaldococcus jannaschii (strain ATCC 43067 / DSM 2661 / JAL-1 / JCM 10045 / NBRC 100440)</name>
    <name type="common">Methanococcus jannaschii</name>
    <dbReference type="NCBI Taxonomy" id="243232"/>
    <lineage>
        <taxon>Archaea</taxon>
        <taxon>Methanobacteriati</taxon>
        <taxon>Methanobacteriota</taxon>
        <taxon>Methanomada group</taxon>
        <taxon>Methanococci</taxon>
        <taxon>Methanococcales</taxon>
        <taxon>Methanocaldococcaceae</taxon>
        <taxon>Methanocaldococcus</taxon>
    </lineage>
</organism>
<proteinExistence type="inferred from homology"/>
<reference key="1">
    <citation type="journal article" date="1996" name="Science">
        <title>Complete genome sequence of the methanogenic archaeon, Methanococcus jannaschii.</title>
        <authorList>
            <person name="Bult C.J."/>
            <person name="White O."/>
            <person name="Olsen G.J."/>
            <person name="Zhou L."/>
            <person name="Fleischmann R.D."/>
            <person name="Sutton G.G."/>
            <person name="Blake J.A."/>
            <person name="FitzGerald L.M."/>
            <person name="Clayton R.A."/>
            <person name="Gocayne J.D."/>
            <person name="Kerlavage A.R."/>
            <person name="Dougherty B.A."/>
            <person name="Tomb J.-F."/>
            <person name="Adams M.D."/>
            <person name="Reich C.I."/>
            <person name="Overbeek R."/>
            <person name="Kirkness E.F."/>
            <person name="Weinstock K.G."/>
            <person name="Merrick J.M."/>
            <person name="Glodek A."/>
            <person name="Scott J.L."/>
            <person name="Geoghagen N.S.M."/>
            <person name="Weidman J.F."/>
            <person name="Fuhrmann J.L."/>
            <person name="Nguyen D."/>
            <person name="Utterback T.R."/>
            <person name="Kelley J.M."/>
            <person name="Peterson J.D."/>
            <person name="Sadow P.W."/>
            <person name="Hanna M.C."/>
            <person name="Cotton M.D."/>
            <person name="Roberts K.M."/>
            <person name="Hurst M.A."/>
            <person name="Kaine B.P."/>
            <person name="Borodovsky M."/>
            <person name="Klenk H.-P."/>
            <person name="Fraser C.M."/>
            <person name="Smith H.O."/>
            <person name="Woese C.R."/>
            <person name="Venter J.C."/>
        </authorList>
    </citation>
    <scope>NUCLEOTIDE SEQUENCE [LARGE SCALE GENOMIC DNA]</scope>
    <source>
        <strain>ATCC 43067 / DSM 2661 / JAL-1 / JCM 10045 / NBRC 100440</strain>
    </source>
</reference>
<accession>Q58889</accession>
<protein>
    <recommendedName>
        <fullName>Putative 26S proteasome regulatory subunit homolog MJ1494</fullName>
    </recommendedName>
</protein>
<dbReference type="EMBL" id="L77117">
    <property type="protein sequence ID" value="AAB99505.1"/>
    <property type="molecule type" value="Genomic_DNA"/>
</dbReference>
<dbReference type="RefSeq" id="WP_010871017.1">
    <property type="nucleotide sequence ID" value="NC_000909.1"/>
</dbReference>
<dbReference type="SMR" id="Q58889"/>
<dbReference type="STRING" id="243232.MJ_1494"/>
<dbReference type="PaxDb" id="243232-MJ_1494"/>
<dbReference type="EnsemblBacteria" id="AAB99505">
    <property type="protein sequence ID" value="AAB99505"/>
    <property type="gene ID" value="MJ_1494"/>
</dbReference>
<dbReference type="GeneID" id="1452401"/>
<dbReference type="KEGG" id="mja:MJ_1494"/>
<dbReference type="eggNOG" id="arCOG04163">
    <property type="taxonomic scope" value="Archaea"/>
</dbReference>
<dbReference type="HOGENOM" id="CLU_000688_21_3_2"/>
<dbReference type="InParanoid" id="Q58889"/>
<dbReference type="OrthoDB" id="77269at2157"/>
<dbReference type="PhylomeDB" id="Q58889"/>
<dbReference type="Proteomes" id="UP000000805">
    <property type="component" value="Chromosome"/>
</dbReference>
<dbReference type="GO" id="GO:0008540">
    <property type="term" value="C:proteasome regulatory particle, base subcomplex"/>
    <property type="evidence" value="ECO:0000318"/>
    <property type="project" value="GO_Central"/>
</dbReference>
<dbReference type="GO" id="GO:0005524">
    <property type="term" value="F:ATP binding"/>
    <property type="evidence" value="ECO:0007669"/>
    <property type="project" value="UniProtKB-KW"/>
</dbReference>
<dbReference type="GO" id="GO:0016887">
    <property type="term" value="F:ATP hydrolysis activity"/>
    <property type="evidence" value="ECO:0007669"/>
    <property type="project" value="InterPro"/>
</dbReference>
<dbReference type="GO" id="GO:0036402">
    <property type="term" value="F:proteasome-activating activity"/>
    <property type="evidence" value="ECO:0000318"/>
    <property type="project" value="GO_Central"/>
</dbReference>
<dbReference type="GO" id="GO:0043161">
    <property type="term" value="P:proteasome-mediated ubiquitin-dependent protein catabolic process"/>
    <property type="evidence" value="ECO:0000318"/>
    <property type="project" value="GO_Central"/>
</dbReference>
<dbReference type="CDD" id="cd19481">
    <property type="entry name" value="RecA-like_protease"/>
    <property type="match status" value="1"/>
</dbReference>
<dbReference type="Gene3D" id="1.10.8.60">
    <property type="match status" value="1"/>
</dbReference>
<dbReference type="Gene3D" id="3.40.50.300">
    <property type="entry name" value="P-loop containing nucleotide triphosphate hydrolases"/>
    <property type="match status" value="1"/>
</dbReference>
<dbReference type="InterPro" id="IPR003593">
    <property type="entry name" value="AAA+_ATPase"/>
</dbReference>
<dbReference type="InterPro" id="IPR003959">
    <property type="entry name" value="ATPase_AAA_core"/>
</dbReference>
<dbReference type="InterPro" id="IPR003960">
    <property type="entry name" value="ATPase_AAA_CS"/>
</dbReference>
<dbReference type="InterPro" id="IPR027417">
    <property type="entry name" value="P-loop_NTPase"/>
</dbReference>
<dbReference type="PANTHER" id="PTHR23076:SF97">
    <property type="entry name" value="ATP-DEPENDENT ZINC METALLOPROTEASE YME1L1"/>
    <property type="match status" value="1"/>
</dbReference>
<dbReference type="PANTHER" id="PTHR23076">
    <property type="entry name" value="METALLOPROTEASE M41 FTSH"/>
    <property type="match status" value="1"/>
</dbReference>
<dbReference type="Pfam" id="PF00004">
    <property type="entry name" value="AAA"/>
    <property type="match status" value="1"/>
</dbReference>
<dbReference type="Pfam" id="PF23902">
    <property type="entry name" value="AAA_lid_PRS2_C"/>
    <property type="match status" value="1"/>
</dbReference>
<dbReference type="Pfam" id="PF23900">
    <property type="entry name" value="PRS2_N"/>
    <property type="match status" value="1"/>
</dbReference>
<dbReference type="SMART" id="SM00382">
    <property type="entry name" value="AAA"/>
    <property type="match status" value="1"/>
</dbReference>
<dbReference type="SUPFAM" id="SSF52540">
    <property type="entry name" value="P-loop containing nucleoside triphosphate hydrolases"/>
    <property type="match status" value="1"/>
</dbReference>
<dbReference type="PROSITE" id="PS00674">
    <property type="entry name" value="AAA"/>
    <property type="match status" value="1"/>
</dbReference>
<evidence type="ECO:0000250" key="1"/>
<evidence type="ECO:0000255" key="2"/>
<evidence type="ECO:0000305" key="3"/>
<name>PRS2_METJA</name>
<sequence>MSKIGFNPIKIKSFSKIKTYDDTLPSLKYVVLEPAGFPIRVSSENVKVSTDDPILFNIYARDQWIGEIVKEGDYLFDNSILPDYAFKVISTYPKEGGMITSETVFKLQTPKKVLRTQFKKAKFSEIIGQEEAKKKCRIIMKYLENPKLFGEWAPKNVLFYGPPGTGKTLMARALATETNSSFILVKAPELIGEHVGDASKMIRELYQRASESAPCIVFIDELDAIGLSREYQSLRGDVSEVVNALLTELDGIKENEGVVTIAATNNPAMLDPAIRSRFEEEIEFKLPNDEERLKIMELYAKKMPLPVKANLKEFVEKTKGFSGRDIKEKFLKPALHRAILEDRDYVSKEDLEWALKKILGNRREAPQHLYL</sequence>
<comment type="function">
    <text evidence="1">The 26S proteasome is involved in the ATP-dependent degradation of ubiquitinated proteins. The regulatory (or ATPase) complex confers ATP dependency and substrate specificity to the 26S complex (By similarity).</text>
</comment>
<comment type="similarity">
    <text evidence="3">Belongs to the AAA ATPase family.</text>
</comment>